<organism>
    <name type="scientific">Syntrophotalea carbinolica (strain DSM 2380 / NBRC 103641 / GraBd1)</name>
    <name type="common">Pelobacter carbinolicus</name>
    <dbReference type="NCBI Taxonomy" id="338963"/>
    <lineage>
        <taxon>Bacteria</taxon>
        <taxon>Pseudomonadati</taxon>
        <taxon>Thermodesulfobacteriota</taxon>
        <taxon>Desulfuromonadia</taxon>
        <taxon>Desulfuromonadales</taxon>
        <taxon>Syntrophotaleaceae</taxon>
        <taxon>Syntrophotalea</taxon>
    </lineage>
</organism>
<dbReference type="EC" id="2.7.7.6" evidence="1"/>
<dbReference type="EMBL" id="CP000142">
    <property type="protein sequence ID" value="ABA87953.1"/>
    <property type="molecule type" value="Genomic_DNA"/>
</dbReference>
<dbReference type="RefSeq" id="WP_011340396.1">
    <property type="nucleotide sequence ID" value="NC_007498.2"/>
</dbReference>
<dbReference type="SMR" id="Q3A6Q4"/>
<dbReference type="STRING" id="338963.Pcar_0694"/>
<dbReference type="KEGG" id="pca:Pcar_0694"/>
<dbReference type="eggNOG" id="COG0085">
    <property type="taxonomic scope" value="Bacteria"/>
</dbReference>
<dbReference type="HOGENOM" id="CLU_000524_4_0_7"/>
<dbReference type="OrthoDB" id="9803954at2"/>
<dbReference type="Proteomes" id="UP000002534">
    <property type="component" value="Chromosome"/>
</dbReference>
<dbReference type="GO" id="GO:0000428">
    <property type="term" value="C:DNA-directed RNA polymerase complex"/>
    <property type="evidence" value="ECO:0007669"/>
    <property type="project" value="UniProtKB-KW"/>
</dbReference>
<dbReference type="GO" id="GO:0003677">
    <property type="term" value="F:DNA binding"/>
    <property type="evidence" value="ECO:0007669"/>
    <property type="project" value="UniProtKB-UniRule"/>
</dbReference>
<dbReference type="GO" id="GO:0003899">
    <property type="term" value="F:DNA-directed RNA polymerase activity"/>
    <property type="evidence" value="ECO:0007669"/>
    <property type="project" value="UniProtKB-UniRule"/>
</dbReference>
<dbReference type="GO" id="GO:0032549">
    <property type="term" value="F:ribonucleoside binding"/>
    <property type="evidence" value="ECO:0007669"/>
    <property type="project" value="InterPro"/>
</dbReference>
<dbReference type="GO" id="GO:0006351">
    <property type="term" value="P:DNA-templated transcription"/>
    <property type="evidence" value="ECO:0007669"/>
    <property type="project" value="UniProtKB-UniRule"/>
</dbReference>
<dbReference type="CDD" id="cd00653">
    <property type="entry name" value="RNA_pol_B_RPB2"/>
    <property type="match status" value="1"/>
</dbReference>
<dbReference type="FunFam" id="2.40.50.100:FF:000006">
    <property type="entry name" value="DNA-directed RNA polymerase subunit beta"/>
    <property type="match status" value="1"/>
</dbReference>
<dbReference type="FunFam" id="3.90.1800.10:FF:000001">
    <property type="entry name" value="DNA-directed RNA polymerase subunit beta"/>
    <property type="match status" value="1"/>
</dbReference>
<dbReference type="Gene3D" id="2.40.50.100">
    <property type="match status" value="1"/>
</dbReference>
<dbReference type="Gene3D" id="2.40.50.150">
    <property type="match status" value="1"/>
</dbReference>
<dbReference type="Gene3D" id="3.90.1100.10">
    <property type="match status" value="2"/>
</dbReference>
<dbReference type="Gene3D" id="2.30.150.10">
    <property type="entry name" value="DNA-directed RNA polymerase, beta subunit, external 1 domain"/>
    <property type="match status" value="1"/>
</dbReference>
<dbReference type="Gene3D" id="2.40.270.10">
    <property type="entry name" value="DNA-directed RNA polymerase, subunit 2, domain 6"/>
    <property type="match status" value="1"/>
</dbReference>
<dbReference type="Gene3D" id="3.90.1800.10">
    <property type="entry name" value="RNA polymerase alpha subunit dimerisation domain"/>
    <property type="match status" value="1"/>
</dbReference>
<dbReference type="Gene3D" id="3.90.1110.10">
    <property type="entry name" value="RNA polymerase Rpb2, domain 2"/>
    <property type="match status" value="1"/>
</dbReference>
<dbReference type="HAMAP" id="MF_01321">
    <property type="entry name" value="RNApol_bact_RpoB"/>
    <property type="match status" value="1"/>
</dbReference>
<dbReference type="InterPro" id="IPR042107">
    <property type="entry name" value="DNA-dir_RNA_pol_bsu_ext_1_sf"/>
</dbReference>
<dbReference type="InterPro" id="IPR019462">
    <property type="entry name" value="DNA-dir_RNA_pol_bsu_external_1"/>
</dbReference>
<dbReference type="InterPro" id="IPR015712">
    <property type="entry name" value="DNA-dir_RNA_pol_su2"/>
</dbReference>
<dbReference type="InterPro" id="IPR007120">
    <property type="entry name" value="DNA-dir_RNAP_su2_dom"/>
</dbReference>
<dbReference type="InterPro" id="IPR037033">
    <property type="entry name" value="DNA-dir_RNAP_su2_hyb_sf"/>
</dbReference>
<dbReference type="InterPro" id="IPR010243">
    <property type="entry name" value="RNA_pol_bsu_bac"/>
</dbReference>
<dbReference type="InterPro" id="IPR007121">
    <property type="entry name" value="RNA_pol_bsu_CS"/>
</dbReference>
<dbReference type="InterPro" id="IPR007644">
    <property type="entry name" value="RNA_pol_bsu_protrusion"/>
</dbReference>
<dbReference type="InterPro" id="IPR007642">
    <property type="entry name" value="RNA_pol_Rpb2_2"/>
</dbReference>
<dbReference type="InterPro" id="IPR037034">
    <property type="entry name" value="RNA_pol_Rpb2_2_sf"/>
</dbReference>
<dbReference type="InterPro" id="IPR007645">
    <property type="entry name" value="RNA_pol_Rpb2_3"/>
</dbReference>
<dbReference type="InterPro" id="IPR007641">
    <property type="entry name" value="RNA_pol_Rpb2_7"/>
</dbReference>
<dbReference type="InterPro" id="IPR014724">
    <property type="entry name" value="RNA_pol_RPB2_OB-fold"/>
</dbReference>
<dbReference type="NCBIfam" id="NF001616">
    <property type="entry name" value="PRK00405.1"/>
    <property type="match status" value="1"/>
</dbReference>
<dbReference type="NCBIfam" id="TIGR02013">
    <property type="entry name" value="rpoB"/>
    <property type="match status" value="1"/>
</dbReference>
<dbReference type="PANTHER" id="PTHR20856">
    <property type="entry name" value="DNA-DIRECTED RNA POLYMERASE I SUBUNIT 2"/>
    <property type="match status" value="1"/>
</dbReference>
<dbReference type="Pfam" id="PF04563">
    <property type="entry name" value="RNA_pol_Rpb2_1"/>
    <property type="match status" value="1"/>
</dbReference>
<dbReference type="Pfam" id="PF04561">
    <property type="entry name" value="RNA_pol_Rpb2_2"/>
    <property type="match status" value="2"/>
</dbReference>
<dbReference type="Pfam" id="PF04565">
    <property type="entry name" value="RNA_pol_Rpb2_3"/>
    <property type="match status" value="1"/>
</dbReference>
<dbReference type="Pfam" id="PF10385">
    <property type="entry name" value="RNA_pol_Rpb2_45"/>
    <property type="match status" value="1"/>
</dbReference>
<dbReference type="Pfam" id="PF00562">
    <property type="entry name" value="RNA_pol_Rpb2_6"/>
    <property type="match status" value="1"/>
</dbReference>
<dbReference type="Pfam" id="PF04560">
    <property type="entry name" value="RNA_pol_Rpb2_7"/>
    <property type="match status" value="1"/>
</dbReference>
<dbReference type="SUPFAM" id="SSF64484">
    <property type="entry name" value="beta and beta-prime subunits of DNA dependent RNA-polymerase"/>
    <property type="match status" value="1"/>
</dbReference>
<dbReference type="PROSITE" id="PS01166">
    <property type="entry name" value="RNA_POL_BETA"/>
    <property type="match status" value="1"/>
</dbReference>
<sequence length="1368" mass="152264">MAYSVANNQLLRKHFSTIKGIIEIPNLIDIQKNSYKRFLQAGLPPSARKNIGLEAVFRSVFPIRDFSETCSLDYVSYSLGTPKYDVGECHQRGMTFAAPVKVCVRLVSWDVDKESGVQAIRDIKEQEVYFGEIPLMTENGTFIINGTERVIVSQLHRSPGVFFDHDKGKTHSSGKILYNARVIPYRGSWLDFDFDHKDLLYVRIDRRRKLPATVLLKALGYSAEELLNYYYQVETVTVDGDSFKKKVNLDLLAGQRASTDVLGNDGEIIVKANRKFTKAAIRKLADSNVEYIPVSEEEIVGKVASTDIVDVSTGEVIVECNEEISESKLEELRTRGIVEFNILFIDHLHVGPYLRETLLLDRMATPEDARIEIYRRLRPGDPPTIKSANALFESLFFNPERYDLSVVGRIKLNYKLGLQSPEDQTTLTKDDILEVVRYLIGLRDGRGTIDDIDHLGNRRVRAVGELLENQYRVGLVRMERAIKERMSLQEVDSLMPHDLINSKPVSAVVKEFFGSSQLSQFMDQTNPLSEITHKRRLSALGPGGLTRERAGFEVRDVHPTHYGRVCPIETPEGPNIGLIASLSTYARINEHGFVETPYRIVEQGKVTNEIRYFSALEEGGHAIAQANAPLDDDGRFLNELVNARQNGEFVLIQREEIGLMDVSPKQLVSVAASLIPFLENDDANRALMGSNMQRQAVPLLRADAPLVGTGMERIVAHDSGAAVVARHNGVVESVDASRIVVKIDEGEVDEDGTGVDIYNLIKFARSNQNTCLNQKPIVKVGDRVASGGIIADGPSTEWGELALGQNVLVAFMPWEGYNFEDSILISEKLVKEDRYTSIHIEELECVARDTKLGKEEITNDIPNLGEDALKDLDESGIVRIGAEVKPGDILVGKITPKGETQLSPEEKLLRAIFGEKAGDVRDTSLRLPPGVEGVVIGARVFSRKGSDKDSRTEYIEKTEIEKLLKDQHDEIRIIRESTHGKLESLLVGQTSASALFDAAGKELLGQGEKITSEVLAEVPFARWREISLLDASENEEKLSAIMTSLAQREELIKAVFADKIEKIKRGDDLPPGVIKMVKVYIAIKRKLSVGDKMAGRHGNKGVLSRVLPEEDMPYMADGTPVEIVLNPLGVPSRMNVGQILETHLGLAARGLGVQIQEHLDRYYTPEAMRTKIGECYEDDRVAEFVDALPDDEVMQLARQLSRGVPMASPVFEGVTEEQMKNQMERAGFASSGQMTLYNGKTGEAFKEKVTVGIMYMLKLHHLVDDKIHARSIGPYSLVTQQPLGGKAQFGGQRLGEMEVWAMEAYGAAHALQEFLTVKSDDVTGRTRMYEAIVKGKHTLEAGLPESFNVLIKELQSLCLDVELLEEQE</sequence>
<evidence type="ECO:0000255" key="1">
    <source>
        <dbReference type="HAMAP-Rule" id="MF_01321"/>
    </source>
</evidence>
<proteinExistence type="inferred from homology"/>
<name>RPOB_SYNC1</name>
<reference key="1">
    <citation type="submission" date="2005-10" db="EMBL/GenBank/DDBJ databases">
        <title>Complete sequence of Pelobacter carbinolicus DSM 2380.</title>
        <authorList>
            <person name="Copeland A."/>
            <person name="Lucas S."/>
            <person name="Lapidus A."/>
            <person name="Barry K."/>
            <person name="Detter J.C."/>
            <person name="Glavina T."/>
            <person name="Hammon N."/>
            <person name="Israni S."/>
            <person name="Pitluck S."/>
            <person name="Chertkov O."/>
            <person name="Schmutz J."/>
            <person name="Larimer F."/>
            <person name="Land M."/>
            <person name="Kyrpides N."/>
            <person name="Ivanova N."/>
            <person name="Richardson P."/>
        </authorList>
    </citation>
    <scope>NUCLEOTIDE SEQUENCE [LARGE SCALE GENOMIC DNA]</scope>
    <source>
        <strain>DSM 2380 / NBRC 103641 / GraBd1</strain>
    </source>
</reference>
<feature type="chain" id="PRO_0000224089" description="DNA-directed RNA polymerase subunit beta">
    <location>
        <begin position="1"/>
        <end position="1368"/>
    </location>
</feature>
<comment type="function">
    <text evidence="1">DNA-dependent RNA polymerase catalyzes the transcription of DNA into RNA using the four ribonucleoside triphosphates as substrates.</text>
</comment>
<comment type="catalytic activity">
    <reaction evidence="1">
        <text>RNA(n) + a ribonucleoside 5'-triphosphate = RNA(n+1) + diphosphate</text>
        <dbReference type="Rhea" id="RHEA:21248"/>
        <dbReference type="Rhea" id="RHEA-COMP:14527"/>
        <dbReference type="Rhea" id="RHEA-COMP:17342"/>
        <dbReference type="ChEBI" id="CHEBI:33019"/>
        <dbReference type="ChEBI" id="CHEBI:61557"/>
        <dbReference type="ChEBI" id="CHEBI:140395"/>
        <dbReference type="EC" id="2.7.7.6"/>
    </reaction>
</comment>
<comment type="subunit">
    <text evidence="1">The RNAP catalytic core consists of 2 alpha, 1 beta, 1 beta' and 1 omega subunit. When a sigma factor is associated with the core the holoenzyme is formed, which can initiate transcription.</text>
</comment>
<comment type="similarity">
    <text evidence="1">Belongs to the RNA polymerase beta chain family.</text>
</comment>
<protein>
    <recommendedName>
        <fullName evidence="1">DNA-directed RNA polymerase subunit beta</fullName>
        <shortName evidence="1">RNAP subunit beta</shortName>
        <ecNumber evidence="1">2.7.7.6</ecNumber>
    </recommendedName>
    <alternativeName>
        <fullName evidence="1">RNA polymerase subunit beta</fullName>
    </alternativeName>
    <alternativeName>
        <fullName evidence="1">Transcriptase subunit beta</fullName>
    </alternativeName>
</protein>
<accession>Q3A6Q4</accession>
<keyword id="KW-0240">DNA-directed RNA polymerase</keyword>
<keyword id="KW-0548">Nucleotidyltransferase</keyword>
<keyword id="KW-1185">Reference proteome</keyword>
<keyword id="KW-0804">Transcription</keyword>
<keyword id="KW-0808">Transferase</keyword>
<gene>
    <name evidence="1" type="primary">rpoB</name>
    <name type="ordered locus">Pcar_0694</name>
</gene>